<accession>O93745</accession>
<protein>
    <recommendedName>
        <fullName>DNA polymerase 1</fullName>
        <ecNumber>2.7.7.7</ecNumber>
    </recommendedName>
    <alternativeName>
        <fullName>DNA polymerase I</fullName>
    </alternativeName>
</protein>
<feature type="chain" id="PRO_0000046474" description="DNA polymerase 1">
    <location>
        <begin position="1"/>
        <end position="959"/>
    </location>
</feature>
<feature type="region of interest" description="Disordered" evidence="1">
    <location>
        <begin position="1"/>
        <end position="110"/>
    </location>
</feature>
<feature type="compositionally biased region" description="Basic and acidic residues" evidence="1">
    <location>
        <begin position="44"/>
        <end position="60"/>
    </location>
</feature>
<feature type="sequence conflict" description="In Ref. 1; BAA75662." evidence="2" ref="1">
    <original>L</original>
    <variation>H</variation>
    <location>
        <position position="193"/>
    </location>
</feature>
<feature type="sequence conflict" description="In Ref. 1; BAA75662." evidence="2" ref="1">
    <original>RDGVEFT</original>
    <variation>PGGSRFY</variation>
    <location>
        <begin position="356"/>
        <end position="362"/>
    </location>
</feature>
<feature type="sequence conflict" description="In Ref. 1; BAA75662." evidence="2" ref="1">
    <original>R</original>
    <variation>G</variation>
    <location>
        <position position="552"/>
    </location>
</feature>
<feature type="sequence conflict" description="In Ref. 1; BAA75662." evidence="2" ref="1">
    <original>I</original>
    <variation>V</variation>
    <location>
        <position position="555"/>
    </location>
</feature>
<feature type="sequence conflict" description="In Ref. 1; BAA75662." evidence="2" ref="1">
    <original>K</original>
    <variation>R</variation>
    <location>
        <position position="822"/>
    </location>
</feature>
<evidence type="ECO:0000256" key="1">
    <source>
        <dbReference type="SAM" id="MobiDB-lite"/>
    </source>
</evidence>
<evidence type="ECO:0000305" key="2"/>
<sequence length="959" mass="109749">MRVRGGQEAAQDKETSLDSDEERGRRGLRQTTLLDYMAGPAKPKKPEPPPTLHREREPESKYQNTLPETTGKEPASMSLRRNQPSSKHEEYNSESGDVRGLTLEPSPQSELSDDDVILELVREPWVESVRGYLLDVRYDGSLGKAVLMLYDPSSGSLVKWADRTGHKPYFLTDARPEDLRAAGVDVSHDESFLQYDLVEKFHPIDRKLVKLTKIVVSDPLAVRRLREKVSSAGFSVWEADIKYHHNYIFDRQLIPGILYEVGGVRIVHTLPLEMDDATRIVDEIFREEPREVRERAREWLRIFEAPPPKLPLIAFDIEVYSPIATRLPDPSTAPYPVISAATADSSGRSRVVLLYRDGVEFTEGALPEGTEVEIYDSERAMLLDLVRILQRYPLVVSFNGDNFDLPYIARRLEVLGVPREFAPIELKQDYATFRRSLHIDLHKLFGIRALQVYAFGNKYRELSLESISRALLGKGKVELKAPVSELNLNKLIEYNLQDARLTLELLTFSNNLVFNLIIMVMRTSKLGIEDITRSQISNWIRGLMYWEHRRRRWLIPSRGEIEKLSSAGARVGAIIKDKKYRGAIVLDPPVGIFFRVLVLDFASLYPSLIKQWNLSYETVNNPNCRDTIEVPEVGHRVCREFKGISNEIVGMLRDFRVRLYKKKSKDKSLREEERLWYDVVQSAMKVYINASYGVFGSEKFSLYSLPVAESVTALGRAVLRGTLEKSRELNLHIVYGDTDSLFIWDPPKDVLNDLVDYVERTYGLELELDKVFRAILFSGLKKNYLGITEEGDIVIKGMVAKKSNTPEFIKDEFSKAVKILSKLEKPEDVEAILAELRDHINTVYNNVKKKVYTLDQFAIKVMLSKNPREYDKNTPQHVKAAMLLQRLGLTLSRGDIVYYVKTRDKLGVKPVQLARLSDVDPGKYVEHVKTAFEQMLMAFGISWDDISGVRKLDRLLFDS</sequence>
<gene>
    <name type="primary">polA</name>
    <name type="ordered locus">APE_0099</name>
</gene>
<dbReference type="EC" id="2.7.7.7"/>
<dbReference type="EMBL" id="AB017500">
    <property type="protein sequence ID" value="BAA75662.1"/>
    <property type="molecule type" value="Genomic_DNA"/>
</dbReference>
<dbReference type="EMBL" id="BA000002">
    <property type="protein sequence ID" value="BAA79008.1"/>
    <property type="molecule type" value="Genomic_DNA"/>
</dbReference>
<dbReference type="PIR" id="F72763">
    <property type="entry name" value="F72763"/>
</dbReference>
<dbReference type="RefSeq" id="WP_010865487.1">
    <property type="nucleotide sequence ID" value="NC_000854.2"/>
</dbReference>
<dbReference type="SMR" id="O93745"/>
<dbReference type="STRING" id="272557.APE_0099"/>
<dbReference type="EnsemblBacteria" id="BAA79008">
    <property type="protein sequence ID" value="BAA79008"/>
    <property type="gene ID" value="APE_0099"/>
</dbReference>
<dbReference type="GeneID" id="1445645"/>
<dbReference type="KEGG" id="ape:APE_0099"/>
<dbReference type="PATRIC" id="fig|272557.25.peg.63"/>
<dbReference type="eggNOG" id="arCOG15272">
    <property type="taxonomic scope" value="Archaea"/>
</dbReference>
<dbReference type="BRENDA" id="2.7.7.7">
    <property type="organism ID" value="171"/>
</dbReference>
<dbReference type="Proteomes" id="UP000002518">
    <property type="component" value="Chromosome"/>
</dbReference>
<dbReference type="GO" id="GO:0003677">
    <property type="term" value="F:DNA binding"/>
    <property type="evidence" value="ECO:0007669"/>
    <property type="project" value="UniProtKB-KW"/>
</dbReference>
<dbReference type="GO" id="GO:0003887">
    <property type="term" value="F:DNA-directed DNA polymerase activity"/>
    <property type="evidence" value="ECO:0007669"/>
    <property type="project" value="UniProtKB-KW"/>
</dbReference>
<dbReference type="GO" id="GO:0000166">
    <property type="term" value="F:nucleotide binding"/>
    <property type="evidence" value="ECO:0007669"/>
    <property type="project" value="InterPro"/>
</dbReference>
<dbReference type="GO" id="GO:0006261">
    <property type="term" value="P:DNA-templated DNA replication"/>
    <property type="evidence" value="ECO:0007669"/>
    <property type="project" value="TreeGrafter"/>
</dbReference>
<dbReference type="CDD" id="cd05783">
    <property type="entry name" value="DNA_polB_B1_exo"/>
    <property type="match status" value="1"/>
</dbReference>
<dbReference type="CDD" id="cd05530">
    <property type="entry name" value="POLBc_B1"/>
    <property type="match status" value="1"/>
</dbReference>
<dbReference type="FunFam" id="1.10.287.690:FF:000011">
    <property type="entry name" value="DNA polymerase"/>
    <property type="match status" value="1"/>
</dbReference>
<dbReference type="Gene3D" id="1.10.132.60">
    <property type="entry name" value="DNA polymerase family B, C-terminal domain"/>
    <property type="match status" value="1"/>
</dbReference>
<dbReference type="Gene3D" id="3.30.342.10">
    <property type="entry name" value="DNA Polymerase, chain B, domain 1"/>
    <property type="match status" value="1"/>
</dbReference>
<dbReference type="Gene3D" id="1.10.287.690">
    <property type="entry name" value="Helix hairpin bin"/>
    <property type="match status" value="1"/>
</dbReference>
<dbReference type="Gene3D" id="3.90.1600.10">
    <property type="entry name" value="Palm domain of DNA polymerase"/>
    <property type="match status" value="1"/>
</dbReference>
<dbReference type="Gene3D" id="3.30.420.10">
    <property type="entry name" value="Ribonuclease H-like superfamily/Ribonuclease H"/>
    <property type="match status" value="1"/>
</dbReference>
<dbReference type="InterPro" id="IPR006172">
    <property type="entry name" value="DNA-dir_DNA_pol_B"/>
</dbReference>
<dbReference type="InterPro" id="IPR017964">
    <property type="entry name" value="DNA-dir_DNA_pol_B_CS"/>
</dbReference>
<dbReference type="InterPro" id="IPR006133">
    <property type="entry name" value="DNA-dir_DNA_pol_B_exonuc"/>
</dbReference>
<dbReference type="InterPro" id="IPR006134">
    <property type="entry name" value="DNA-dir_DNA_pol_B_multi_dom"/>
</dbReference>
<dbReference type="InterPro" id="IPR043502">
    <property type="entry name" value="DNA/RNA_pol_sf"/>
</dbReference>
<dbReference type="InterPro" id="IPR042087">
    <property type="entry name" value="DNA_pol_B_thumb"/>
</dbReference>
<dbReference type="InterPro" id="IPR023211">
    <property type="entry name" value="DNA_pol_palm_dom_sf"/>
</dbReference>
<dbReference type="InterPro" id="IPR050240">
    <property type="entry name" value="DNA_pol_type-B"/>
</dbReference>
<dbReference type="InterPro" id="IPR012337">
    <property type="entry name" value="RNaseH-like_sf"/>
</dbReference>
<dbReference type="InterPro" id="IPR036397">
    <property type="entry name" value="RNaseH_sf"/>
</dbReference>
<dbReference type="NCBIfam" id="NF004417">
    <property type="entry name" value="PRK05761.1-3"/>
    <property type="match status" value="1"/>
</dbReference>
<dbReference type="NCBIfam" id="NF004419">
    <property type="entry name" value="PRK05761.1-5"/>
    <property type="match status" value="1"/>
</dbReference>
<dbReference type="PANTHER" id="PTHR10322:SF20">
    <property type="entry name" value="DNA POLYMERASE 1"/>
    <property type="match status" value="1"/>
</dbReference>
<dbReference type="PANTHER" id="PTHR10322">
    <property type="entry name" value="DNA POLYMERASE CATALYTIC SUBUNIT"/>
    <property type="match status" value="1"/>
</dbReference>
<dbReference type="Pfam" id="PF00136">
    <property type="entry name" value="DNA_pol_B"/>
    <property type="match status" value="1"/>
</dbReference>
<dbReference type="Pfam" id="PF03104">
    <property type="entry name" value="DNA_pol_B_exo1"/>
    <property type="match status" value="1"/>
</dbReference>
<dbReference type="PRINTS" id="PR00106">
    <property type="entry name" value="DNAPOLB"/>
</dbReference>
<dbReference type="SMART" id="SM00486">
    <property type="entry name" value="POLBc"/>
    <property type="match status" value="1"/>
</dbReference>
<dbReference type="SUPFAM" id="SSF56672">
    <property type="entry name" value="DNA/RNA polymerases"/>
    <property type="match status" value="1"/>
</dbReference>
<dbReference type="SUPFAM" id="SSF53098">
    <property type="entry name" value="Ribonuclease H-like"/>
    <property type="match status" value="1"/>
</dbReference>
<dbReference type="PROSITE" id="PS00116">
    <property type="entry name" value="DNA_POLYMERASE_B"/>
    <property type="match status" value="1"/>
</dbReference>
<organism>
    <name type="scientific">Aeropyrum pernix (strain ATCC 700893 / DSM 11879 / JCM 9820 / NBRC 100138 / K1)</name>
    <dbReference type="NCBI Taxonomy" id="272557"/>
    <lineage>
        <taxon>Archaea</taxon>
        <taxon>Thermoproteota</taxon>
        <taxon>Thermoprotei</taxon>
        <taxon>Desulfurococcales</taxon>
        <taxon>Desulfurococcaceae</taxon>
        <taxon>Aeropyrum</taxon>
    </lineage>
</organism>
<reference key="1">
    <citation type="submission" date="1998-09" db="EMBL/GenBank/DDBJ databases">
        <title>Isolation of the genes encoding two alpha-like DNA polymerases from Aeropyrum pernix.</title>
        <authorList>
            <person name="Ishino Y."/>
            <person name="Cann I.K."/>
        </authorList>
    </citation>
    <scope>NUCLEOTIDE SEQUENCE [GENOMIC DNA] OF 37-959</scope>
    <source>
        <strain>ATCC 700893 / DSM 11879 / JCM 9820 / NBRC 100138 / K1</strain>
    </source>
</reference>
<reference key="2">
    <citation type="journal article" date="1999" name="DNA Res.">
        <title>Complete genome sequence of an aerobic hyper-thermophilic crenarchaeon, Aeropyrum pernix K1.</title>
        <authorList>
            <person name="Kawarabayasi Y."/>
            <person name="Hino Y."/>
            <person name="Horikawa H."/>
            <person name="Yamazaki S."/>
            <person name="Haikawa Y."/>
            <person name="Jin-no K."/>
            <person name="Takahashi M."/>
            <person name="Sekine M."/>
            <person name="Baba S."/>
            <person name="Ankai A."/>
            <person name="Kosugi H."/>
            <person name="Hosoyama A."/>
            <person name="Fukui S."/>
            <person name="Nagai Y."/>
            <person name="Nishijima K."/>
            <person name="Nakazawa H."/>
            <person name="Takamiya M."/>
            <person name="Masuda S."/>
            <person name="Funahashi T."/>
            <person name="Tanaka T."/>
            <person name="Kudoh Y."/>
            <person name="Yamazaki J."/>
            <person name="Kushida N."/>
            <person name="Oguchi A."/>
            <person name="Aoki K."/>
            <person name="Kubota K."/>
            <person name="Nakamura Y."/>
            <person name="Nomura N."/>
            <person name="Sako Y."/>
            <person name="Kikuchi H."/>
        </authorList>
    </citation>
    <scope>NUCLEOTIDE SEQUENCE [LARGE SCALE GENOMIC DNA]</scope>
    <source>
        <strain>ATCC 700893 / DSM 11879 / JCM 9820 / NBRC 100138 / K1</strain>
    </source>
</reference>
<keyword id="KW-0235">DNA replication</keyword>
<keyword id="KW-0238">DNA-binding</keyword>
<keyword id="KW-0239">DNA-directed DNA polymerase</keyword>
<keyword id="KW-0548">Nucleotidyltransferase</keyword>
<keyword id="KW-1185">Reference proteome</keyword>
<keyword id="KW-0808">Transferase</keyword>
<name>DPOL1_AERPE</name>
<proteinExistence type="inferred from homology"/>
<comment type="catalytic activity">
    <reaction>
        <text>DNA(n) + a 2'-deoxyribonucleoside 5'-triphosphate = DNA(n+1) + diphosphate</text>
        <dbReference type="Rhea" id="RHEA:22508"/>
        <dbReference type="Rhea" id="RHEA-COMP:17339"/>
        <dbReference type="Rhea" id="RHEA-COMP:17340"/>
        <dbReference type="ChEBI" id="CHEBI:33019"/>
        <dbReference type="ChEBI" id="CHEBI:61560"/>
        <dbReference type="ChEBI" id="CHEBI:173112"/>
        <dbReference type="EC" id="2.7.7.7"/>
    </reaction>
</comment>
<comment type="similarity">
    <text evidence="2">Belongs to the DNA polymerase type-B family.</text>
</comment>